<reference key="1">
    <citation type="submission" date="2007-06" db="EMBL/GenBank/DDBJ databases">
        <title>Complete sequence of Clostridium beijerinckii NCIMB 8052.</title>
        <authorList>
            <consortium name="US DOE Joint Genome Institute"/>
            <person name="Copeland A."/>
            <person name="Lucas S."/>
            <person name="Lapidus A."/>
            <person name="Barry K."/>
            <person name="Detter J.C."/>
            <person name="Glavina del Rio T."/>
            <person name="Hammon N."/>
            <person name="Israni S."/>
            <person name="Dalin E."/>
            <person name="Tice H."/>
            <person name="Pitluck S."/>
            <person name="Sims D."/>
            <person name="Brettin T."/>
            <person name="Bruce D."/>
            <person name="Tapia R."/>
            <person name="Brainard J."/>
            <person name="Schmutz J."/>
            <person name="Larimer F."/>
            <person name="Land M."/>
            <person name="Hauser L."/>
            <person name="Kyrpides N."/>
            <person name="Mikhailova N."/>
            <person name="Bennet G."/>
            <person name="Cann I."/>
            <person name="Chen J.-S."/>
            <person name="Contreras A.L."/>
            <person name="Jones D."/>
            <person name="Kashket E."/>
            <person name="Mitchell W."/>
            <person name="Stoddard S."/>
            <person name="Schwarz W."/>
            <person name="Qureshi N."/>
            <person name="Young M."/>
            <person name="Shi Z."/>
            <person name="Ezeji T."/>
            <person name="White B."/>
            <person name="Blaschek H."/>
            <person name="Richardson P."/>
        </authorList>
    </citation>
    <scope>NUCLEOTIDE SEQUENCE [LARGE SCALE GENOMIC DNA]</scope>
    <source>
        <strain>ATCC 51743 / NCIMB 8052</strain>
    </source>
</reference>
<protein>
    <recommendedName>
        <fullName evidence="1">Methionyl-tRNA formyltransferase</fullName>
        <ecNumber evidence="1">2.1.2.9</ecNumber>
    </recommendedName>
</protein>
<accession>A6LSJ8</accession>
<proteinExistence type="inferred from homology"/>
<feature type="chain" id="PRO_1000077294" description="Methionyl-tRNA formyltransferase">
    <location>
        <begin position="1"/>
        <end position="308"/>
    </location>
</feature>
<feature type="binding site" evidence="1">
    <location>
        <begin position="109"/>
        <end position="112"/>
    </location>
    <ligand>
        <name>(6S)-5,6,7,8-tetrahydrofolate</name>
        <dbReference type="ChEBI" id="CHEBI:57453"/>
    </ligand>
</feature>
<organism>
    <name type="scientific">Clostridium beijerinckii (strain ATCC 51743 / NCIMB 8052)</name>
    <name type="common">Clostridium acetobutylicum</name>
    <dbReference type="NCBI Taxonomy" id="290402"/>
    <lineage>
        <taxon>Bacteria</taxon>
        <taxon>Bacillati</taxon>
        <taxon>Bacillota</taxon>
        <taxon>Clostridia</taxon>
        <taxon>Eubacteriales</taxon>
        <taxon>Clostridiaceae</taxon>
        <taxon>Clostridium</taxon>
    </lineage>
</organism>
<keyword id="KW-0648">Protein biosynthesis</keyword>
<keyword id="KW-0808">Transferase</keyword>
<dbReference type="EC" id="2.1.2.9" evidence="1"/>
<dbReference type="EMBL" id="CP000721">
    <property type="protein sequence ID" value="ABR33328.1"/>
    <property type="molecule type" value="Genomic_DNA"/>
</dbReference>
<dbReference type="RefSeq" id="WP_011968486.1">
    <property type="nucleotide sequence ID" value="NC_009617.1"/>
</dbReference>
<dbReference type="SMR" id="A6LSJ8"/>
<dbReference type="KEGG" id="cbe:Cbei_1146"/>
<dbReference type="eggNOG" id="COG0223">
    <property type="taxonomic scope" value="Bacteria"/>
</dbReference>
<dbReference type="HOGENOM" id="CLU_033347_1_1_9"/>
<dbReference type="Proteomes" id="UP000000565">
    <property type="component" value="Chromosome"/>
</dbReference>
<dbReference type="GO" id="GO:0005829">
    <property type="term" value="C:cytosol"/>
    <property type="evidence" value="ECO:0007669"/>
    <property type="project" value="TreeGrafter"/>
</dbReference>
<dbReference type="GO" id="GO:0004479">
    <property type="term" value="F:methionyl-tRNA formyltransferase activity"/>
    <property type="evidence" value="ECO:0007669"/>
    <property type="project" value="UniProtKB-UniRule"/>
</dbReference>
<dbReference type="CDD" id="cd08646">
    <property type="entry name" value="FMT_core_Met-tRNA-FMT_N"/>
    <property type="match status" value="1"/>
</dbReference>
<dbReference type="CDD" id="cd08704">
    <property type="entry name" value="Met_tRNA_FMT_C"/>
    <property type="match status" value="1"/>
</dbReference>
<dbReference type="Gene3D" id="3.10.25.10">
    <property type="entry name" value="Formyl transferase, C-terminal domain"/>
    <property type="match status" value="1"/>
</dbReference>
<dbReference type="Gene3D" id="3.40.50.170">
    <property type="entry name" value="Formyl transferase, N-terminal domain"/>
    <property type="match status" value="1"/>
</dbReference>
<dbReference type="HAMAP" id="MF_00182">
    <property type="entry name" value="Formyl_trans"/>
    <property type="match status" value="1"/>
</dbReference>
<dbReference type="InterPro" id="IPR005794">
    <property type="entry name" value="Fmt"/>
</dbReference>
<dbReference type="InterPro" id="IPR005793">
    <property type="entry name" value="Formyl_trans_C"/>
</dbReference>
<dbReference type="InterPro" id="IPR037022">
    <property type="entry name" value="Formyl_trans_C_sf"/>
</dbReference>
<dbReference type="InterPro" id="IPR002376">
    <property type="entry name" value="Formyl_transf_N"/>
</dbReference>
<dbReference type="InterPro" id="IPR036477">
    <property type="entry name" value="Formyl_transf_N_sf"/>
</dbReference>
<dbReference type="InterPro" id="IPR011034">
    <property type="entry name" value="Formyl_transferase-like_C_sf"/>
</dbReference>
<dbReference type="InterPro" id="IPR001555">
    <property type="entry name" value="GART_AS"/>
</dbReference>
<dbReference type="InterPro" id="IPR044135">
    <property type="entry name" value="Met-tRNA-FMT_C"/>
</dbReference>
<dbReference type="InterPro" id="IPR041711">
    <property type="entry name" value="Met-tRNA-FMT_N"/>
</dbReference>
<dbReference type="NCBIfam" id="TIGR00460">
    <property type="entry name" value="fmt"/>
    <property type="match status" value="1"/>
</dbReference>
<dbReference type="PANTHER" id="PTHR11138">
    <property type="entry name" value="METHIONYL-TRNA FORMYLTRANSFERASE"/>
    <property type="match status" value="1"/>
</dbReference>
<dbReference type="PANTHER" id="PTHR11138:SF5">
    <property type="entry name" value="METHIONYL-TRNA FORMYLTRANSFERASE, MITOCHONDRIAL"/>
    <property type="match status" value="1"/>
</dbReference>
<dbReference type="Pfam" id="PF02911">
    <property type="entry name" value="Formyl_trans_C"/>
    <property type="match status" value="1"/>
</dbReference>
<dbReference type="Pfam" id="PF00551">
    <property type="entry name" value="Formyl_trans_N"/>
    <property type="match status" value="1"/>
</dbReference>
<dbReference type="SUPFAM" id="SSF50486">
    <property type="entry name" value="FMT C-terminal domain-like"/>
    <property type="match status" value="1"/>
</dbReference>
<dbReference type="SUPFAM" id="SSF53328">
    <property type="entry name" value="Formyltransferase"/>
    <property type="match status" value="1"/>
</dbReference>
<dbReference type="PROSITE" id="PS00373">
    <property type="entry name" value="GART"/>
    <property type="match status" value="1"/>
</dbReference>
<sequence>MNIVFMGTPDFAVPSLQRMIKEYNVTAILTQPDKPKGRGKKMAYSAVKEEGLKHEIPIYQPIKLKDDRDLIEKLKELKPDFIIVVAFGQILTKEVLDIPKYGCINLHASLLPMYRGAAPLNWAIINGEKSSGNTTMLMDVGLDTGDMILKDEVEITNNMTTGELHDILMVRGADLLVKSIEGISKGDIVPEKQGNETFYAKMLDKNIANIDWNKSAEEIHNLVRGLNPWPIAYTDYKNERMKIYETEVLKEKSNKEPGTIIDVSKNGVKVSCKEDVLLIKRVQFPNGKPLTIEQYINGHEIEENIILQ</sequence>
<evidence type="ECO:0000255" key="1">
    <source>
        <dbReference type="HAMAP-Rule" id="MF_00182"/>
    </source>
</evidence>
<comment type="function">
    <text evidence="1">Attaches a formyl group to the free amino group of methionyl-tRNA(fMet). The formyl group appears to play a dual role in the initiator identity of N-formylmethionyl-tRNA by promoting its recognition by IF2 and preventing the misappropriation of this tRNA by the elongation apparatus.</text>
</comment>
<comment type="catalytic activity">
    <reaction evidence="1">
        <text>L-methionyl-tRNA(fMet) + (6R)-10-formyltetrahydrofolate = N-formyl-L-methionyl-tRNA(fMet) + (6S)-5,6,7,8-tetrahydrofolate + H(+)</text>
        <dbReference type="Rhea" id="RHEA:24380"/>
        <dbReference type="Rhea" id="RHEA-COMP:9952"/>
        <dbReference type="Rhea" id="RHEA-COMP:9953"/>
        <dbReference type="ChEBI" id="CHEBI:15378"/>
        <dbReference type="ChEBI" id="CHEBI:57453"/>
        <dbReference type="ChEBI" id="CHEBI:78530"/>
        <dbReference type="ChEBI" id="CHEBI:78844"/>
        <dbReference type="ChEBI" id="CHEBI:195366"/>
        <dbReference type="EC" id="2.1.2.9"/>
    </reaction>
</comment>
<comment type="similarity">
    <text evidence="1">Belongs to the Fmt family.</text>
</comment>
<name>FMT_CLOB8</name>
<gene>
    <name evidence="1" type="primary">fmt</name>
    <name type="ordered locus">Cbei_1146</name>
</gene>